<keyword id="KW-0067">ATP-binding</keyword>
<keyword id="KW-1003">Cell membrane</keyword>
<keyword id="KW-0963">Cytoplasm</keyword>
<keyword id="KW-0242">Dwarfism</keyword>
<keyword id="KW-0472">Membrane</keyword>
<keyword id="KW-0547">Nucleotide-binding</keyword>
<keyword id="KW-0653">Protein transport</keyword>
<keyword id="KW-1185">Reference proteome</keyword>
<keyword id="KW-1278">Translocase</keyword>
<keyword id="KW-0811">Translocation</keyword>
<keyword id="KW-0813">Transport</keyword>
<reference key="1">
    <citation type="journal article" date="2005" name="J. Bacteriol.">
        <title>Simultaneous deficiency of both MurA and p60 proteins generates a rough phenotype in Listeria monocytogenes.</title>
        <authorList>
            <person name="Machata S."/>
            <person name="Hain T."/>
            <person name="Rohde M."/>
            <person name="Chakraborty T."/>
        </authorList>
    </citation>
    <scope>NUCLEOTIDE SEQUENCE [GENOMIC DNA]</scope>
    <scope>DISRUPTION PHENOTYPE</scope>
    <scope>CHARACTERIZATION</scope>
    <source>
        <strain>ATCC BAA-679 / EGD-e</strain>
        <strain>SLCC7509</strain>
        <strain>SLCC7510</strain>
    </source>
</reference>
<reference key="2">
    <citation type="journal article" date="2001" name="Science">
        <title>Comparative genomics of Listeria species.</title>
        <authorList>
            <person name="Glaser P."/>
            <person name="Frangeul L."/>
            <person name="Buchrieser C."/>
            <person name="Rusniok C."/>
            <person name="Amend A."/>
            <person name="Baquero F."/>
            <person name="Berche P."/>
            <person name="Bloecker H."/>
            <person name="Brandt P."/>
            <person name="Chakraborty T."/>
            <person name="Charbit A."/>
            <person name="Chetouani F."/>
            <person name="Couve E."/>
            <person name="de Daruvar A."/>
            <person name="Dehoux P."/>
            <person name="Domann E."/>
            <person name="Dominguez-Bernal G."/>
            <person name="Duchaud E."/>
            <person name="Durant L."/>
            <person name="Dussurget O."/>
            <person name="Entian K.-D."/>
            <person name="Fsihi H."/>
            <person name="Garcia-del Portillo F."/>
            <person name="Garrido P."/>
            <person name="Gautier L."/>
            <person name="Goebel W."/>
            <person name="Gomez-Lopez N."/>
            <person name="Hain T."/>
            <person name="Hauf J."/>
            <person name="Jackson D."/>
            <person name="Jones L.-M."/>
            <person name="Kaerst U."/>
            <person name="Kreft J."/>
            <person name="Kuhn M."/>
            <person name="Kunst F."/>
            <person name="Kurapkat G."/>
            <person name="Madueno E."/>
            <person name="Maitournam A."/>
            <person name="Mata Vicente J."/>
            <person name="Ng E."/>
            <person name="Nedjari H."/>
            <person name="Nordsiek G."/>
            <person name="Novella S."/>
            <person name="de Pablos B."/>
            <person name="Perez-Diaz J.-C."/>
            <person name="Purcell R."/>
            <person name="Remmel B."/>
            <person name="Rose M."/>
            <person name="Schlueter T."/>
            <person name="Simoes N."/>
            <person name="Tierrez A."/>
            <person name="Vazquez-Boland J.-A."/>
            <person name="Voss H."/>
            <person name="Wehland J."/>
            <person name="Cossart P."/>
        </authorList>
    </citation>
    <scope>NUCLEOTIDE SEQUENCE [LARGE SCALE GENOMIC DNA]</scope>
    <source>
        <strain>ATCC BAA-679 / EGD-e</strain>
    </source>
</reference>
<feature type="chain" id="PRO_0000318366" description="Protein translocase subunit SecA 2">
    <location>
        <begin position="1"/>
        <end position="776"/>
    </location>
</feature>
<feature type="binding site" evidence="1">
    <location>
        <position position="80"/>
    </location>
    <ligand>
        <name>ATP</name>
        <dbReference type="ChEBI" id="CHEBI:30616"/>
    </ligand>
</feature>
<feature type="binding site" evidence="1">
    <location>
        <begin position="98"/>
        <end position="102"/>
    </location>
    <ligand>
        <name>ATP</name>
        <dbReference type="ChEBI" id="CHEBI:30616"/>
    </ligand>
</feature>
<feature type="binding site" evidence="1">
    <location>
        <position position="486"/>
    </location>
    <ligand>
        <name>ATP</name>
        <dbReference type="ChEBI" id="CHEBI:30616"/>
    </ligand>
</feature>
<feature type="sequence variant" description="In strain: SLCC7509 and SLCC7510.">
    <original>E</original>
    <variation>D</variation>
    <location>
        <position position="32"/>
    </location>
</feature>
<feature type="sequence variant" description="In strain: SLCC7510.">
    <original>E</original>
    <variation>G</variation>
    <location>
        <position position="407"/>
    </location>
</feature>
<feature type="sequence variant" description="In strain: SLCC7509.">
    <original>A</original>
    <variation>T</variation>
    <location>
        <position position="553"/>
    </location>
</feature>
<feature type="sequence variant" description="In strain: SLCC7510.">
    <original>I</original>
    <variation>F</variation>
    <location>
        <position position="627"/>
    </location>
</feature>
<feature type="sequence variant" description="In strain: SLCC7509.">
    <original>E</original>
    <variation>D</variation>
    <location>
        <position position="674"/>
    </location>
</feature>
<gene>
    <name evidence="1" type="primary">secA2</name>
    <name type="ordered locus">lmo0583</name>
</gene>
<dbReference type="EC" id="7.4.2.8" evidence="1"/>
<dbReference type="EMBL" id="AM040041">
    <property type="protein sequence ID" value="CAJ01897.2"/>
    <property type="molecule type" value="Genomic_DNA"/>
</dbReference>
<dbReference type="EMBL" id="AM040042">
    <property type="protein sequence ID" value="CAJ01898.2"/>
    <property type="molecule type" value="Genomic_DNA"/>
</dbReference>
<dbReference type="EMBL" id="AL591975">
    <property type="protein sequence ID" value="CAC98662.1"/>
    <property type="molecule type" value="Genomic_DNA"/>
</dbReference>
<dbReference type="PIR" id="AH1147">
    <property type="entry name" value="AH1147"/>
</dbReference>
<dbReference type="RefSeq" id="NP_464111.1">
    <property type="nucleotide sequence ID" value="NC_003210.1"/>
</dbReference>
<dbReference type="RefSeq" id="WP_010989521.1">
    <property type="nucleotide sequence ID" value="NC_003210.1"/>
</dbReference>
<dbReference type="SMR" id="P0DJP3"/>
<dbReference type="STRING" id="169963.gene:17593234"/>
<dbReference type="PaxDb" id="169963-lmo0583"/>
<dbReference type="EnsemblBacteria" id="CAC98662">
    <property type="protein sequence ID" value="CAC98662"/>
    <property type="gene ID" value="CAC98662"/>
</dbReference>
<dbReference type="GeneID" id="984550"/>
<dbReference type="KEGG" id="lmo:lmo0583"/>
<dbReference type="PATRIC" id="fig|169963.11.peg.602"/>
<dbReference type="eggNOG" id="COG0653">
    <property type="taxonomic scope" value="Bacteria"/>
</dbReference>
<dbReference type="HOGENOM" id="CLU_005314_3_0_9"/>
<dbReference type="OrthoDB" id="9805579at2"/>
<dbReference type="PhylomeDB" id="P0DJP3"/>
<dbReference type="BioCyc" id="LMON169963:LMO0583-MONOMER"/>
<dbReference type="PHI-base" id="PHI:5255"/>
<dbReference type="Proteomes" id="UP000000817">
    <property type="component" value="Chromosome"/>
</dbReference>
<dbReference type="GO" id="GO:0031522">
    <property type="term" value="C:cell envelope Sec protein transport complex"/>
    <property type="evidence" value="ECO:0000318"/>
    <property type="project" value="GO_Central"/>
</dbReference>
<dbReference type="GO" id="GO:0005737">
    <property type="term" value="C:cytoplasm"/>
    <property type="evidence" value="ECO:0007669"/>
    <property type="project" value="UniProtKB-SubCell"/>
</dbReference>
<dbReference type="GO" id="GO:0005886">
    <property type="term" value="C:plasma membrane"/>
    <property type="evidence" value="ECO:0000318"/>
    <property type="project" value="GO_Central"/>
</dbReference>
<dbReference type="GO" id="GO:0005524">
    <property type="term" value="F:ATP binding"/>
    <property type="evidence" value="ECO:0000318"/>
    <property type="project" value="GO_Central"/>
</dbReference>
<dbReference type="GO" id="GO:0008564">
    <property type="term" value="F:protein-exporting ATPase activity"/>
    <property type="evidence" value="ECO:0007669"/>
    <property type="project" value="UniProtKB-EC"/>
</dbReference>
<dbReference type="GO" id="GO:0065002">
    <property type="term" value="P:intracellular protein transmembrane transport"/>
    <property type="evidence" value="ECO:0007669"/>
    <property type="project" value="UniProtKB-UniRule"/>
</dbReference>
<dbReference type="GO" id="GO:0017038">
    <property type="term" value="P:protein import"/>
    <property type="evidence" value="ECO:0007669"/>
    <property type="project" value="InterPro"/>
</dbReference>
<dbReference type="GO" id="GO:0006605">
    <property type="term" value="P:protein targeting"/>
    <property type="evidence" value="ECO:0007669"/>
    <property type="project" value="UniProtKB-UniRule"/>
</dbReference>
<dbReference type="GO" id="GO:0043952">
    <property type="term" value="P:protein transport by the Sec complex"/>
    <property type="evidence" value="ECO:0000318"/>
    <property type="project" value="GO_Central"/>
</dbReference>
<dbReference type="CDD" id="cd17928">
    <property type="entry name" value="DEXDc_SecA"/>
    <property type="match status" value="1"/>
</dbReference>
<dbReference type="CDD" id="cd18803">
    <property type="entry name" value="SF2_C_secA"/>
    <property type="match status" value="1"/>
</dbReference>
<dbReference type="FunFam" id="3.40.50.300:FF:000429">
    <property type="entry name" value="Preprotein translocase subunit SecA"/>
    <property type="match status" value="1"/>
</dbReference>
<dbReference type="FunFam" id="1.10.3060.10:FF:000009">
    <property type="entry name" value="Protein translocase subunit SecA 2"/>
    <property type="match status" value="1"/>
</dbReference>
<dbReference type="Gene3D" id="1.10.3060.10">
    <property type="entry name" value="Helical scaffold and wing domains of SecA"/>
    <property type="match status" value="1"/>
</dbReference>
<dbReference type="Gene3D" id="3.40.50.300">
    <property type="entry name" value="P-loop containing nucleotide triphosphate hydrolases"/>
    <property type="match status" value="3"/>
</dbReference>
<dbReference type="Gene3D" id="3.90.1440.10">
    <property type="entry name" value="SecA, preprotein cross-linking domain"/>
    <property type="match status" value="1"/>
</dbReference>
<dbReference type="HAMAP" id="MF_01382">
    <property type="entry name" value="SecA"/>
    <property type="match status" value="1"/>
</dbReference>
<dbReference type="InterPro" id="IPR014001">
    <property type="entry name" value="Helicase_ATP-bd"/>
</dbReference>
<dbReference type="InterPro" id="IPR001650">
    <property type="entry name" value="Helicase_C-like"/>
</dbReference>
<dbReference type="InterPro" id="IPR027417">
    <property type="entry name" value="P-loop_NTPase"/>
</dbReference>
<dbReference type="InterPro" id="IPR000185">
    <property type="entry name" value="SecA"/>
</dbReference>
<dbReference type="InterPro" id="IPR011115">
    <property type="entry name" value="SecA_DEAD"/>
</dbReference>
<dbReference type="InterPro" id="IPR014018">
    <property type="entry name" value="SecA_motor_DEAD"/>
</dbReference>
<dbReference type="InterPro" id="IPR011130">
    <property type="entry name" value="SecA_preprotein_X-link_dom"/>
</dbReference>
<dbReference type="InterPro" id="IPR044722">
    <property type="entry name" value="SecA_SF2_C"/>
</dbReference>
<dbReference type="InterPro" id="IPR011116">
    <property type="entry name" value="SecA_Wing/Scaffold"/>
</dbReference>
<dbReference type="InterPro" id="IPR036266">
    <property type="entry name" value="SecA_Wing/Scaffold_sf"/>
</dbReference>
<dbReference type="InterPro" id="IPR036670">
    <property type="entry name" value="SecA_X-link_sf"/>
</dbReference>
<dbReference type="NCBIfam" id="NF006630">
    <property type="entry name" value="PRK09200.1"/>
    <property type="match status" value="1"/>
</dbReference>
<dbReference type="NCBIfam" id="NF012136">
    <property type="entry name" value="SecA2_Lm"/>
    <property type="match status" value="1"/>
</dbReference>
<dbReference type="PANTHER" id="PTHR30612:SF0">
    <property type="entry name" value="CHLOROPLAST PROTEIN-TRANSPORTING ATPASE"/>
    <property type="match status" value="1"/>
</dbReference>
<dbReference type="PANTHER" id="PTHR30612">
    <property type="entry name" value="SECA INNER MEMBRANE COMPONENT OF SEC PROTEIN SECRETION SYSTEM"/>
    <property type="match status" value="1"/>
</dbReference>
<dbReference type="Pfam" id="PF21090">
    <property type="entry name" value="P-loop_SecA"/>
    <property type="match status" value="1"/>
</dbReference>
<dbReference type="Pfam" id="PF07517">
    <property type="entry name" value="SecA_DEAD"/>
    <property type="match status" value="1"/>
</dbReference>
<dbReference type="Pfam" id="PF01043">
    <property type="entry name" value="SecA_PP_bind"/>
    <property type="match status" value="1"/>
</dbReference>
<dbReference type="Pfam" id="PF07516">
    <property type="entry name" value="SecA_SW"/>
    <property type="match status" value="1"/>
</dbReference>
<dbReference type="PRINTS" id="PR00906">
    <property type="entry name" value="SECA"/>
</dbReference>
<dbReference type="SMART" id="SM00957">
    <property type="entry name" value="SecA_DEAD"/>
    <property type="match status" value="1"/>
</dbReference>
<dbReference type="SMART" id="SM00958">
    <property type="entry name" value="SecA_PP_bind"/>
    <property type="match status" value="1"/>
</dbReference>
<dbReference type="SUPFAM" id="SSF81886">
    <property type="entry name" value="Helical scaffold and wing domains of SecA"/>
    <property type="match status" value="1"/>
</dbReference>
<dbReference type="SUPFAM" id="SSF52540">
    <property type="entry name" value="P-loop containing nucleoside triphosphate hydrolases"/>
    <property type="match status" value="2"/>
</dbReference>
<dbReference type="SUPFAM" id="SSF81767">
    <property type="entry name" value="Pre-protein crosslinking domain of SecA"/>
    <property type="match status" value="1"/>
</dbReference>
<dbReference type="PROSITE" id="PS51196">
    <property type="entry name" value="SECA_MOTOR_DEAD"/>
    <property type="match status" value="1"/>
</dbReference>
<name>SECA2_LISMO</name>
<organism>
    <name type="scientific">Listeria monocytogenes serovar 1/2a (strain ATCC BAA-679 / EGD-e)</name>
    <dbReference type="NCBI Taxonomy" id="169963"/>
    <lineage>
        <taxon>Bacteria</taxon>
        <taxon>Bacillati</taxon>
        <taxon>Bacillota</taxon>
        <taxon>Bacilli</taxon>
        <taxon>Bacillales</taxon>
        <taxon>Listeriaceae</taxon>
        <taxon>Listeria</taxon>
    </lineage>
</organism>
<evidence type="ECO:0000255" key="1">
    <source>
        <dbReference type="HAMAP-Rule" id="MF_01382"/>
    </source>
</evidence>
<evidence type="ECO:0000269" key="2">
    <source>
    </source>
</evidence>
<proteinExistence type="evidence at protein level"/>
<accession>P0DJP3</accession>
<accession>Q2WCM9</accession>
<accession>Q2WCN0</accession>
<accession>Q8RLX5</accession>
<accession>Q8Y9E7</accession>
<comment type="function">
    <text evidence="1">Part of the Sec protein translocase complex. Interacts with the SecYEG preprotein conducting channel. Has a central role in coupling the hydrolysis of ATP to the transfer of proteins into and across the cell membrane, serving as an ATP-driven molecular motor driving the stepwise translocation of polypeptide chains across the membrane.</text>
</comment>
<comment type="catalytic activity">
    <reaction evidence="1">
        <text>ATP + H2O + cellular proteinSide 1 = ADP + phosphate + cellular proteinSide 2.</text>
        <dbReference type="EC" id="7.4.2.8"/>
    </reaction>
</comment>
<comment type="subunit">
    <text evidence="1">Monomer and homodimer. Part of the essential Sec protein translocation apparatus which comprises SecA, SecYEG and auxiliary proteins SecDF. Other proteins may also be involved.</text>
</comment>
<comment type="subcellular location">
    <subcellularLocation>
        <location evidence="1">Cell membrane</location>
        <topology evidence="1">Peripheral membrane protein</topology>
        <orientation evidence="1">Cytoplasmic side</orientation>
    </subcellularLocation>
    <subcellularLocation>
        <location evidence="1">Cytoplasm</location>
    </subcellularLocation>
    <text evidence="1">Distribution is 50-50.</text>
</comment>
<comment type="disruption phenotype">
    <text evidence="2">Knockout causes a smooth to rough phenotype transition; cells grow as filaments longer than 10 um in length with septa between cells but no indentations. Knockout also causes a smooth to rough phenotype transition; cells grow as filaments longer than 10 um in length with septa between cells but no indentations (PubMed:16321943).</text>
</comment>
<comment type="similarity">
    <text evidence="1">Belongs to the SecA family.</text>
</comment>
<protein>
    <recommendedName>
        <fullName evidence="1">Protein translocase subunit SecA 2</fullName>
        <ecNumber evidence="1">7.4.2.8</ecNumber>
    </recommendedName>
</protein>
<sequence>MRQNYDDRKIVKQYREIARQIVKKEGLYKNMEQAELCEQTNFWREKFKTKPMTDRDKINIFALAREAASRIIGLDAVVVQLIGALVLGDGKVAEMKTGEGKTLMSLFVMFIEVMRGNRVHLVTANEYLARRDREEIGQVLEYLGVSVALNESGLDIAQKKAIYTADVIYGTASEFGFDYLRDNMVRQKEDKVQSGLDFVLIDEADSILIDEARTPLLISDRKEEDLSLYHTANKLVKKMMKDDYEMEEHKRFVWLNDAGIEKAQKFWGVESLYSAEAQSELRITMLLMRAHFLMHKDKDYVVLDDEVLIIDPHTGRALPGRRFNDGLHQAIEAKEGVEVKEESRTLATITIQNYFRMYKKISGMTGTAKTEEEEFRQIYNMDVVVIPTNLRVNREDMQDDIFYTKKEKGRAIVYEVSWRYEKGQPTLIGTSSIKSNEWISGLLDAAGIPHQVLNAKNHAQEAEIIAKAGKRGMVTLATNMAGRGTDIKLDPDVHKLGGLAVIGTERHESRRIDLQLMGRSGRRGDPGFSKFMISLEDDLLEQFESKSWEKLSAKLKRKAPRDGKPVNSRKIHAVVVDAQKRLEGANYDIRKDLLSYDEVIDLQRKMVYKERDLLLERNKLGVSSEKILREVAEYSFIHPSDIPEEELEIYYSRQKELLGGTKFPISFDQVTLMEPREVVEEIVSWHKKERNKFPAETIAAIEREVYLNLMDQMWVMHLDAMVQLREGIHLRAYGQQDPLVMYQKEGAQLFEKFQADYHFYFAHALLELDPDGLIQG</sequence>